<comment type="sequence caution" evidence="1">
    <conflict type="erroneous initiation">
        <sequence resource="EMBL-CDS" id="AAF13640"/>
    </conflict>
</comment>
<accession>Q6F050</accession>
<accession>Q8KYF4</accession>
<accession>Q9RMZ7</accession>
<protein>
    <recommendedName>
        <fullName>Uncharacterized protein pXO2-35/BXB0035/GBAA_pXO2_0035</fullName>
    </recommendedName>
</protein>
<dbReference type="EMBL" id="AF188935">
    <property type="protein sequence ID" value="AAF13640.1"/>
    <property type="status" value="ALT_INIT"/>
    <property type="molecule type" value="Genomic_DNA"/>
</dbReference>
<dbReference type="EMBL" id="AE011191">
    <property type="protein sequence ID" value="AAM26195.1"/>
    <property type="molecule type" value="Genomic_DNA"/>
</dbReference>
<dbReference type="EMBL" id="AE017335">
    <property type="status" value="NOT_ANNOTATED_CDS"/>
    <property type="molecule type" value="Genomic_DNA"/>
</dbReference>
<dbReference type="RefSeq" id="NP_053190.1">
    <property type="nucleotide sequence ID" value="NC_002146.1"/>
</dbReference>
<dbReference type="SMR" id="Q6F050"/>
<dbReference type="HOGENOM" id="CLU_058187_1_0_9"/>
<dbReference type="OMA" id="MNREWAY"/>
<dbReference type="Proteomes" id="UP000000594">
    <property type="component" value="Plasmid pXO2"/>
</dbReference>
<dbReference type="InterPro" id="IPR047705">
    <property type="entry name" value="AimR-like"/>
</dbReference>
<dbReference type="NCBIfam" id="NF038310">
    <property type="entry name" value="lysogeny_AimR"/>
    <property type="match status" value="1"/>
</dbReference>
<dbReference type="Pfam" id="PF22871">
    <property type="entry name" value="AimR"/>
    <property type="match status" value="1"/>
</dbReference>
<keyword id="KW-0614">Plasmid</keyword>
<keyword id="KW-1185">Reference proteome</keyword>
<proteinExistence type="predicted"/>
<evidence type="ECO:0000305" key="1"/>
<sequence>MRSCGILQGKALLDELEERKKRKIIKTEEIKVLYGILTFYTMYDLEKFNSLFDYAEVMQPNIELITDEFVRTAYSGRIKEGLSYAYLMQDNIDKSREICHEILNFKDDKNCFSLLRASALVYLAESYTFESYERASWYINKSLETLELCQSERANRRKENVLNTYAFIKLVNRQGLDSISIYHPAEESFFEIVKGNYKKAEIILNNIKNENGSLKPIEYCYLGLATNDITLLEKSIELFECEGNRFYCKFPKKMLVNLSKNGTMCEGGAK</sequence>
<geneLocation type="plasmid">
    <name>pXO2</name>
</geneLocation>
<reference key="1">
    <citation type="journal article" date="1999" name="J. Appl. Microbiol.">
        <title>Sequence, assembly and analysis of pXO1 and pXO2.</title>
        <authorList>
            <person name="Okinaka R.T."/>
            <person name="Cloud K."/>
            <person name="Hampton O."/>
            <person name="Hoffmaster A."/>
            <person name="Hill K.K."/>
            <person name="Keim P."/>
            <person name="Koehler T."/>
            <person name="Lamke G."/>
            <person name="Kumano S."/>
            <person name="Manter D."/>
            <person name="Martinez Y."/>
            <person name="Ricke D."/>
            <person name="Svensson R."/>
            <person name="Jackson P.J."/>
        </authorList>
    </citation>
    <scope>NUCLEOTIDE SEQUENCE [GENOMIC DNA]</scope>
    <source>
        <strain>Pasteur</strain>
    </source>
</reference>
<reference key="2">
    <citation type="journal article" date="2002" name="Science">
        <title>Comparative genome sequencing for discovery of novel polymorphisms in Bacillus anthracis.</title>
        <authorList>
            <person name="Read T.D."/>
            <person name="Salzberg S.L."/>
            <person name="Pop M."/>
            <person name="Shumway M.F."/>
            <person name="Umayam L."/>
            <person name="Jiang L."/>
            <person name="Holtzapple E."/>
            <person name="Busch J.D."/>
            <person name="Smith K.L."/>
            <person name="Schupp J.M."/>
            <person name="Solomon D."/>
            <person name="Keim P."/>
            <person name="Fraser C.M."/>
        </authorList>
    </citation>
    <scope>NUCLEOTIDE SEQUENCE [GENOMIC DNA]</scope>
    <source>
        <strain>Ames / isolate Florida / A2012</strain>
    </source>
</reference>
<reference key="3">
    <citation type="journal article" date="2009" name="J. Bacteriol.">
        <title>The complete genome sequence of Bacillus anthracis Ames 'Ancestor'.</title>
        <authorList>
            <person name="Ravel J."/>
            <person name="Jiang L."/>
            <person name="Stanley S.T."/>
            <person name="Wilson M.R."/>
            <person name="Decker R.S."/>
            <person name="Read T.D."/>
            <person name="Worsham P."/>
            <person name="Keim P.S."/>
            <person name="Salzberg S.L."/>
            <person name="Fraser-Liggett C.M."/>
            <person name="Rasko D.A."/>
        </authorList>
    </citation>
    <scope>NUCLEOTIDE SEQUENCE [LARGE SCALE GENOMIC DNA]</scope>
    <source>
        <strain>Ames ancestor</strain>
    </source>
</reference>
<gene>
    <name type="ordered locus">pXO2-35</name>
    <name type="ordered locus">BXB0035</name>
    <name type="ordered locus">GBAA_pXO2_0035</name>
</gene>
<organism>
    <name type="scientific">Bacillus anthracis</name>
    <dbReference type="NCBI Taxonomy" id="1392"/>
    <lineage>
        <taxon>Bacteria</taxon>
        <taxon>Bacillati</taxon>
        <taxon>Bacillota</taxon>
        <taxon>Bacilli</taxon>
        <taxon>Bacillales</taxon>
        <taxon>Bacillaceae</taxon>
        <taxon>Bacillus</taxon>
        <taxon>Bacillus cereus group</taxon>
    </lineage>
</organism>
<name>Y6535_BACAN</name>
<feature type="chain" id="PRO_0000216849" description="Uncharacterized protein pXO2-35/BXB0035/GBAA_pXO2_0035">
    <location>
        <begin position="1"/>
        <end position="270"/>
    </location>
</feature>